<dbReference type="EMBL" id="BA000022">
    <property type="protein sequence ID" value="BAA17349.1"/>
    <property type="molecule type" value="Genomic_DNA"/>
</dbReference>
<dbReference type="PIR" id="S77502">
    <property type="entry name" value="S77502"/>
</dbReference>
<dbReference type="SMR" id="P73320"/>
<dbReference type="FunCoup" id="P73320">
    <property type="interactions" value="515"/>
</dbReference>
<dbReference type="IntAct" id="P73320">
    <property type="interactions" value="13"/>
</dbReference>
<dbReference type="STRING" id="1148.gene:10498212"/>
<dbReference type="PaxDb" id="1148-1652427"/>
<dbReference type="EnsemblBacteria" id="BAA17349">
    <property type="protein sequence ID" value="BAA17349"/>
    <property type="gene ID" value="BAA17349"/>
</dbReference>
<dbReference type="KEGG" id="syn:sll1799"/>
<dbReference type="eggNOG" id="COG0087">
    <property type="taxonomic scope" value="Bacteria"/>
</dbReference>
<dbReference type="InParanoid" id="P73320"/>
<dbReference type="PhylomeDB" id="P73320"/>
<dbReference type="Proteomes" id="UP000001425">
    <property type="component" value="Chromosome"/>
</dbReference>
<dbReference type="GO" id="GO:0022625">
    <property type="term" value="C:cytosolic large ribosomal subunit"/>
    <property type="evidence" value="ECO:0000318"/>
    <property type="project" value="GO_Central"/>
</dbReference>
<dbReference type="GO" id="GO:0019843">
    <property type="term" value="F:rRNA binding"/>
    <property type="evidence" value="ECO:0007669"/>
    <property type="project" value="UniProtKB-UniRule"/>
</dbReference>
<dbReference type="GO" id="GO:0003735">
    <property type="term" value="F:structural constituent of ribosome"/>
    <property type="evidence" value="ECO:0000318"/>
    <property type="project" value="GO_Central"/>
</dbReference>
<dbReference type="GO" id="GO:0006412">
    <property type="term" value="P:translation"/>
    <property type="evidence" value="ECO:0007669"/>
    <property type="project" value="UniProtKB-UniRule"/>
</dbReference>
<dbReference type="FunFam" id="3.30.160.810:FF:000001">
    <property type="entry name" value="50S ribosomal protein L3"/>
    <property type="match status" value="1"/>
</dbReference>
<dbReference type="FunFam" id="2.40.30.10:FF:000065">
    <property type="entry name" value="50S ribosomal protein L3, chloroplastic"/>
    <property type="match status" value="1"/>
</dbReference>
<dbReference type="Gene3D" id="3.30.160.810">
    <property type="match status" value="1"/>
</dbReference>
<dbReference type="Gene3D" id="2.40.30.10">
    <property type="entry name" value="Translation factors"/>
    <property type="match status" value="1"/>
</dbReference>
<dbReference type="HAMAP" id="MF_01325_B">
    <property type="entry name" value="Ribosomal_uL3_B"/>
    <property type="match status" value="1"/>
</dbReference>
<dbReference type="InterPro" id="IPR000597">
    <property type="entry name" value="Ribosomal_uL3"/>
</dbReference>
<dbReference type="InterPro" id="IPR019927">
    <property type="entry name" value="Ribosomal_uL3_bac/org-type"/>
</dbReference>
<dbReference type="InterPro" id="IPR019926">
    <property type="entry name" value="Ribosomal_uL3_CS"/>
</dbReference>
<dbReference type="InterPro" id="IPR009000">
    <property type="entry name" value="Transl_B-barrel_sf"/>
</dbReference>
<dbReference type="NCBIfam" id="TIGR03625">
    <property type="entry name" value="L3_bact"/>
    <property type="match status" value="1"/>
</dbReference>
<dbReference type="PANTHER" id="PTHR11229">
    <property type="entry name" value="50S RIBOSOMAL PROTEIN L3"/>
    <property type="match status" value="1"/>
</dbReference>
<dbReference type="PANTHER" id="PTHR11229:SF16">
    <property type="entry name" value="LARGE RIBOSOMAL SUBUNIT PROTEIN UL3C"/>
    <property type="match status" value="1"/>
</dbReference>
<dbReference type="Pfam" id="PF00297">
    <property type="entry name" value="Ribosomal_L3"/>
    <property type="match status" value="1"/>
</dbReference>
<dbReference type="SUPFAM" id="SSF50447">
    <property type="entry name" value="Translation proteins"/>
    <property type="match status" value="1"/>
</dbReference>
<dbReference type="PROSITE" id="PS00474">
    <property type="entry name" value="RIBOSOMAL_L3"/>
    <property type="match status" value="1"/>
</dbReference>
<evidence type="ECO:0000255" key="1">
    <source>
        <dbReference type="HAMAP-Rule" id="MF_01325"/>
    </source>
</evidence>
<evidence type="ECO:0000256" key="2">
    <source>
        <dbReference type="SAM" id="MobiDB-lite"/>
    </source>
</evidence>
<evidence type="ECO:0000305" key="3"/>
<sequence length="213" mass="22741">MSIGILGTKLGMTQIFDQESGISIPVTVVQAGPCPVTQVKTQDTDGYNAIQVGFLPVKEKALSKPELGHLKKSNTDPMRHLKEYRLTDAPNLQPGDAVTADIFQAGDLVDVAGQSMGRGFAGYQKRHNFRRGNMTHGSKNHRLPGSTGAGTTPGRVYPGKRMAGQYGASQVTVRRLTVVRVDAERNLLIIKGALPGKPGTLLNITPAKTVGRG</sequence>
<organism>
    <name type="scientific">Synechocystis sp. (strain ATCC 27184 / PCC 6803 / Kazusa)</name>
    <dbReference type="NCBI Taxonomy" id="1111708"/>
    <lineage>
        <taxon>Bacteria</taxon>
        <taxon>Bacillati</taxon>
        <taxon>Cyanobacteriota</taxon>
        <taxon>Cyanophyceae</taxon>
        <taxon>Synechococcales</taxon>
        <taxon>Merismopediaceae</taxon>
        <taxon>Synechocystis</taxon>
    </lineage>
</organism>
<proteinExistence type="inferred from homology"/>
<gene>
    <name evidence="1" type="primary">rplC</name>
    <name evidence="1" type="synonym">rpl3</name>
    <name type="ordered locus">sll1799</name>
</gene>
<feature type="chain" id="PRO_0000077177" description="Large ribosomal subunit protein uL3">
    <location>
        <begin position="1"/>
        <end position="213"/>
    </location>
</feature>
<feature type="region of interest" description="Disordered" evidence="2">
    <location>
        <begin position="135"/>
        <end position="155"/>
    </location>
</feature>
<protein>
    <recommendedName>
        <fullName evidence="1">Large ribosomal subunit protein uL3</fullName>
    </recommendedName>
    <alternativeName>
        <fullName evidence="3">50S ribosomal protein L3</fullName>
    </alternativeName>
</protein>
<reference key="1">
    <citation type="journal article" date="1996" name="DNA Res.">
        <title>Sequence analysis of the genome of the unicellular cyanobacterium Synechocystis sp. strain PCC6803. II. Sequence determination of the entire genome and assignment of potential protein-coding regions.</title>
        <authorList>
            <person name="Kaneko T."/>
            <person name="Sato S."/>
            <person name="Kotani H."/>
            <person name="Tanaka A."/>
            <person name="Asamizu E."/>
            <person name="Nakamura Y."/>
            <person name="Miyajima N."/>
            <person name="Hirosawa M."/>
            <person name="Sugiura M."/>
            <person name="Sasamoto S."/>
            <person name="Kimura T."/>
            <person name="Hosouchi T."/>
            <person name="Matsuno A."/>
            <person name="Muraki A."/>
            <person name="Nakazaki N."/>
            <person name="Naruo K."/>
            <person name="Okumura S."/>
            <person name="Shimpo S."/>
            <person name="Takeuchi C."/>
            <person name="Wada T."/>
            <person name="Watanabe A."/>
            <person name="Yamada M."/>
            <person name="Yasuda M."/>
            <person name="Tabata S."/>
        </authorList>
    </citation>
    <scope>NUCLEOTIDE SEQUENCE [LARGE SCALE GENOMIC DNA]</scope>
    <source>
        <strain>ATCC 27184 / PCC 6803 / Kazusa</strain>
    </source>
</reference>
<comment type="function">
    <text evidence="1">One of the primary rRNA binding proteins, it binds directly near the 3'-end of the 23S rRNA, where it nucleates assembly of the 50S subunit.</text>
</comment>
<comment type="subunit">
    <text evidence="1">Part of the 50S ribosomal subunit. Forms a cluster with proteins L14 and L19.</text>
</comment>
<comment type="similarity">
    <text evidence="1">Belongs to the universal ribosomal protein uL3 family.</text>
</comment>
<name>RL3_SYNY3</name>
<keyword id="KW-1185">Reference proteome</keyword>
<keyword id="KW-0687">Ribonucleoprotein</keyword>
<keyword id="KW-0689">Ribosomal protein</keyword>
<keyword id="KW-0694">RNA-binding</keyword>
<keyword id="KW-0699">rRNA-binding</keyword>
<accession>P73320</accession>